<dbReference type="EC" id="2.5.1.16" evidence="1"/>
<dbReference type="EMBL" id="BA000023">
    <property type="protein sequence ID" value="BAB65325.1"/>
    <property type="molecule type" value="Genomic_DNA"/>
</dbReference>
<dbReference type="RefSeq" id="WP_010978308.1">
    <property type="nucleotide sequence ID" value="NC_003106.2"/>
</dbReference>
<dbReference type="SMR" id="Q975S5"/>
<dbReference type="STRING" id="273063.STK_03460"/>
<dbReference type="GeneID" id="1458266"/>
<dbReference type="KEGG" id="sto:STK_03460"/>
<dbReference type="PATRIC" id="fig|273063.9.peg.404"/>
<dbReference type="eggNOG" id="arCOG00050">
    <property type="taxonomic scope" value="Archaea"/>
</dbReference>
<dbReference type="OrthoDB" id="10538at2157"/>
<dbReference type="UniPathway" id="UPA00248">
    <property type="reaction ID" value="UER00314"/>
</dbReference>
<dbReference type="Proteomes" id="UP000001015">
    <property type="component" value="Chromosome"/>
</dbReference>
<dbReference type="GO" id="GO:0005737">
    <property type="term" value="C:cytoplasm"/>
    <property type="evidence" value="ECO:0007669"/>
    <property type="project" value="UniProtKB-SubCell"/>
</dbReference>
<dbReference type="GO" id="GO:0004766">
    <property type="term" value="F:spermidine synthase activity"/>
    <property type="evidence" value="ECO:0007669"/>
    <property type="project" value="UniProtKB-UniRule"/>
</dbReference>
<dbReference type="GO" id="GO:0010487">
    <property type="term" value="F:thermospermine synthase activity"/>
    <property type="evidence" value="ECO:0007669"/>
    <property type="project" value="UniProtKB-ARBA"/>
</dbReference>
<dbReference type="GO" id="GO:0008295">
    <property type="term" value="P:spermidine biosynthetic process"/>
    <property type="evidence" value="ECO:0007669"/>
    <property type="project" value="UniProtKB-UniRule"/>
</dbReference>
<dbReference type="CDD" id="cd02440">
    <property type="entry name" value="AdoMet_MTases"/>
    <property type="match status" value="1"/>
</dbReference>
<dbReference type="FunFam" id="3.40.50.150:FF:000088">
    <property type="entry name" value="Polyamine aminopropyltransferase"/>
    <property type="match status" value="1"/>
</dbReference>
<dbReference type="Gene3D" id="2.30.140.10">
    <property type="entry name" value="Spermidine synthase, tetramerisation domain"/>
    <property type="match status" value="1"/>
</dbReference>
<dbReference type="Gene3D" id="3.40.50.150">
    <property type="entry name" value="Vaccinia Virus protein VP39"/>
    <property type="match status" value="1"/>
</dbReference>
<dbReference type="HAMAP" id="MF_00198">
    <property type="entry name" value="Spermidine_synth"/>
    <property type="match status" value="1"/>
</dbReference>
<dbReference type="InterPro" id="IPR030374">
    <property type="entry name" value="PABS"/>
</dbReference>
<dbReference type="InterPro" id="IPR030373">
    <property type="entry name" value="PABS_CS"/>
</dbReference>
<dbReference type="InterPro" id="IPR029063">
    <property type="entry name" value="SAM-dependent_MTases_sf"/>
</dbReference>
<dbReference type="InterPro" id="IPR001045">
    <property type="entry name" value="Spermi_synthase"/>
</dbReference>
<dbReference type="InterPro" id="IPR035246">
    <property type="entry name" value="Spermidine_synt_N"/>
</dbReference>
<dbReference type="InterPro" id="IPR037163">
    <property type="entry name" value="Spermidine_synt_N_sf"/>
</dbReference>
<dbReference type="NCBIfam" id="NF002010">
    <property type="entry name" value="PRK00811.1"/>
    <property type="match status" value="1"/>
</dbReference>
<dbReference type="PANTHER" id="PTHR43317">
    <property type="entry name" value="THERMOSPERMINE SYNTHASE ACAULIS5"/>
    <property type="match status" value="1"/>
</dbReference>
<dbReference type="PANTHER" id="PTHR43317:SF1">
    <property type="entry name" value="THERMOSPERMINE SYNTHASE ACAULIS5"/>
    <property type="match status" value="1"/>
</dbReference>
<dbReference type="Pfam" id="PF17284">
    <property type="entry name" value="Spermine_synt_N"/>
    <property type="match status" value="1"/>
</dbReference>
<dbReference type="Pfam" id="PF01564">
    <property type="entry name" value="Spermine_synth"/>
    <property type="match status" value="1"/>
</dbReference>
<dbReference type="SUPFAM" id="SSF53335">
    <property type="entry name" value="S-adenosyl-L-methionine-dependent methyltransferases"/>
    <property type="match status" value="1"/>
</dbReference>
<dbReference type="PROSITE" id="PS01330">
    <property type="entry name" value="PABS_1"/>
    <property type="match status" value="1"/>
</dbReference>
<dbReference type="PROSITE" id="PS51006">
    <property type="entry name" value="PABS_2"/>
    <property type="match status" value="1"/>
</dbReference>
<keyword id="KW-0963">Cytoplasm</keyword>
<keyword id="KW-0620">Polyamine biosynthesis</keyword>
<keyword id="KW-1185">Reference proteome</keyword>
<keyword id="KW-0745">Spermidine biosynthesis</keyword>
<keyword id="KW-0808">Transferase</keyword>
<sequence length="300" mass="34576">MYEWHWHIEWQTPYEFHGHAITKVIAEEKTPYQRALLVELARFGKALILDGKIQSTITDEFIYHEALVHPLLLSINNPEKILILGGGEGATLREVLKHKTIKNVTMVDIDPVVIDFAKKYLQEWHQGAFDNPKSKLVIEDGYKFIKETKEKFDAVVIDLTDPIKDSPSQMLYTKEFYEEVKRISKWGIVTQATSPSFSLETFSIIYNTIKHVFKKVSAGITYVPAFDGLWGFVYASDEVNPAEFSKEEINNRIKERIDGSLRFYDGETHITMFSIPKHIREVLEKENKISTRENPVAVPA</sequence>
<accession>Q975S5</accession>
<feature type="chain" id="PRO_0000156535" description="Polyamine aminopropyltransferase">
    <location>
        <begin position="1"/>
        <end position="300"/>
    </location>
</feature>
<feature type="domain" description="PABS" evidence="1">
    <location>
        <begin position="4"/>
        <end position="237"/>
    </location>
</feature>
<feature type="active site" description="Proton acceptor" evidence="1">
    <location>
        <position position="158"/>
    </location>
</feature>
<feature type="binding site" evidence="1">
    <location>
        <position position="33"/>
    </location>
    <ligand>
        <name>S-methyl-5'-thioadenosine</name>
        <dbReference type="ChEBI" id="CHEBI:17509"/>
    </ligand>
</feature>
<feature type="binding site" evidence="1">
    <location>
        <position position="64"/>
    </location>
    <ligand>
        <name>spermidine</name>
        <dbReference type="ChEBI" id="CHEBI:57834"/>
    </ligand>
</feature>
<feature type="binding site" evidence="1">
    <location>
        <position position="88"/>
    </location>
    <ligand>
        <name>spermidine</name>
        <dbReference type="ChEBI" id="CHEBI:57834"/>
    </ligand>
</feature>
<feature type="binding site" evidence="1">
    <location>
        <position position="108"/>
    </location>
    <ligand>
        <name>S-methyl-5'-thioadenosine</name>
        <dbReference type="ChEBI" id="CHEBI:17509"/>
    </ligand>
</feature>
<feature type="binding site" evidence="1">
    <location>
        <begin position="140"/>
        <end position="141"/>
    </location>
    <ligand>
        <name>S-methyl-5'-thioadenosine</name>
        <dbReference type="ChEBI" id="CHEBI:17509"/>
    </ligand>
</feature>
<feature type="binding site" evidence="1">
    <location>
        <position position="167"/>
    </location>
    <ligand>
        <name>S-methyl-5'-thioadenosine</name>
        <dbReference type="ChEBI" id="CHEBI:17509"/>
    </ligand>
</feature>
<proteinExistence type="inferred from homology"/>
<name>SPEE_SULTO</name>
<protein>
    <recommendedName>
        <fullName evidence="1">Polyamine aminopropyltransferase</fullName>
    </recommendedName>
    <alternativeName>
        <fullName evidence="1">Putrescine aminopropyltransferase</fullName>
        <shortName evidence="1">PAPT</shortName>
    </alternativeName>
    <alternativeName>
        <fullName evidence="1">Spermidine synthase</fullName>
        <shortName evidence="1">SPDS</shortName>
        <shortName evidence="1">SPDSY</shortName>
        <ecNumber evidence="1">2.5.1.16</ecNumber>
    </alternativeName>
</protein>
<organism>
    <name type="scientific">Sulfurisphaera tokodaii (strain DSM 16993 / JCM 10545 / NBRC 100140 / 7)</name>
    <name type="common">Sulfolobus tokodaii</name>
    <dbReference type="NCBI Taxonomy" id="273063"/>
    <lineage>
        <taxon>Archaea</taxon>
        <taxon>Thermoproteota</taxon>
        <taxon>Thermoprotei</taxon>
        <taxon>Sulfolobales</taxon>
        <taxon>Sulfolobaceae</taxon>
        <taxon>Sulfurisphaera</taxon>
    </lineage>
</organism>
<gene>
    <name evidence="1" type="primary">speE</name>
    <name type="ordered locus">STK_03460</name>
</gene>
<comment type="function">
    <text evidence="1">Catalyzes the irreversible transfer of a propylamine group from the amino donor S-adenosylmethioninamine (decarboxy-AdoMet) to putrescine (1,4-diaminobutane) to yield spermidine.</text>
</comment>
<comment type="catalytic activity">
    <reaction evidence="1">
        <text>S-adenosyl 3-(methylsulfanyl)propylamine + putrescine = S-methyl-5'-thioadenosine + spermidine + H(+)</text>
        <dbReference type="Rhea" id="RHEA:12721"/>
        <dbReference type="ChEBI" id="CHEBI:15378"/>
        <dbReference type="ChEBI" id="CHEBI:17509"/>
        <dbReference type="ChEBI" id="CHEBI:57443"/>
        <dbReference type="ChEBI" id="CHEBI:57834"/>
        <dbReference type="ChEBI" id="CHEBI:326268"/>
        <dbReference type="EC" id="2.5.1.16"/>
    </reaction>
</comment>
<comment type="pathway">
    <text evidence="1">Amine and polyamine biosynthesis; spermidine biosynthesis; spermidine from putrescine: step 1/1.</text>
</comment>
<comment type="subunit">
    <text evidence="1">Homodimer or homotetramer.</text>
</comment>
<comment type="subcellular location">
    <subcellularLocation>
        <location evidence="1">Cytoplasm</location>
    </subcellularLocation>
</comment>
<comment type="similarity">
    <text evidence="1">Belongs to the spermidine/spermine synthase family.</text>
</comment>
<evidence type="ECO:0000255" key="1">
    <source>
        <dbReference type="HAMAP-Rule" id="MF_00198"/>
    </source>
</evidence>
<reference key="1">
    <citation type="journal article" date="2001" name="DNA Res.">
        <title>Complete genome sequence of an aerobic thermoacidophilic Crenarchaeon, Sulfolobus tokodaii strain7.</title>
        <authorList>
            <person name="Kawarabayasi Y."/>
            <person name="Hino Y."/>
            <person name="Horikawa H."/>
            <person name="Jin-no K."/>
            <person name="Takahashi M."/>
            <person name="Sekine M."/>
            <person name="Baba S."/>
            <person name="Ankai A."/>
            <person name="Kosugi H."/>
            <person name="Hosoyama A."/>
            <person name="Fukui S."/>
            <person name="Nagai Y."/>
            <person name="Nishijima K."/>
            <person name="Otsuka R."/>
            <person name="Nakazawa H."/>
            <person name="Takamiya M."/>
            <person name="Kato Y."/>
            <person name="Yoshizawa T."/>
            <person name="Tanaka T."/>
            <person name="Kudoh Y."/>
            <person name="Yamazaki J."/>
            <person name="Kushida N."/>
            <person name="Oguchi A."/>
            <person name="Aoki K."/>
            <person name="Masuda S."/>
            <person name="Yanagii M."/>
            <person name="Nishimura M."/>
            <person name="Yamagishi A."/>
            <person name="Oshima T."/>
            <person name="Kikuchi H."/>
        </authorList>
    </citation>
    <scope>NUCLEOTIDE SEQUENCE [LARGE SCALE GENOMIC DNA]</scope>
    <source>
        <strain>DSM 16993 / JCM 10545 / NBRC 100140 / 7</strain>
    </source>
</reference>